<feature type="chain" id="PRO_0000383544" description="Probable 4-deoxy-4-formamido-L-arabinose-phosphoundecaprenol deformylase ArnD">
    <location>
        <begin position="1"/>
        <end position="296"/>
    </location>
</feature>
<feature type="domain" description="NodB homology" evidence="1">
    <location>
        <begin position="2"/>
        <end position="260"/>
    </location>
</feature>
<reference key="1">
    <citation type="journal article" date="2005" name="Nucleic Acids Res.">
        <title>Genome dynamics and diversity of Shigella species, the etiologic agents of bacillary dysentery.</title>
        <authorList>
            <person name="Yang F."/>
            <person name="Yang J."/>
            <person name="Zhang X."/>
            <person name="Chen L."/>
            <person name="Jiang Y."/>
            <person name="Yan Y."/>
            <person name="Tang X."/>
            <person name="Wang J."/>
            <person name="Xiong Z."/>
            <person name="Dong J."/>
            <person name="Xue Y."/>
            <person name="Zhu Y."/>
            <person name="Xu X."/>
            <person name="Sun L."/>
            <person name="Chen S."/>
            <person name="Nie H."/>
            <person name="Peng J."/>
            <person name="Xu J."/>
            <person name="Wang Y."/>
            <person name="Yuan Z."/>
            <person name="Wen Y."/>
            <person name="Yao Z."/>
            <person name="Shen Y."/>
            <person name="Qiang B."/>
            <person name="Hou Y."/>
            <person name="Yu J."/>
            <person name="Jin Q."/>
        </authorList>
    </citation>
    <scope>NUCLEOTIDE SEQUENCE [LARGE SCALE GENOMIC DNA]</scope>
    <source>
        <strain>Sd197</strain>
    </source>
</reference>
<comment type="function">
    <text evidence="1">Catalyzes the deformylation of 4-deoxy-4-formamido-L-arabinose-phosphoundecaprenol to 4-amino-4-deoxy-L-arabinose-phosphoundecaprenol. The modified arabinose is attached to lipid A and is required for resistance to polymyxin and cationic antimicrobial peptides.</text>
</comment>
<comment type="catalytic activity">
    <reaction evidence="1">
        <text>4-deoxy-4-formamido-alpha-L-arabinopyranosyl di-trans,octa-cis-undecaprenyl phosphate + H2O = 4-amino-4-deoxy-alpha-L-arabinopyranosyl di-trans,octa-cis-undecaprenyl phosphate + formate</text>
        <dbReference type="Rhea" id="RHEA:27734"/>
        <dbReference type="ChEBI" id="CHEBI:15377"/>
        <dbReference type="ChEBI" id="CHEBI:15740"/>
        <dbReference type="ChEBI" id="CHEBI:58909"/>
        <dbReference type="ChEBI" id="CHEBI:60463"/>
        <dbReference type="EC" id="3.5.1.n3"/>
    </reaction>
</comment>
<comment type="pathway">
    <text evidence="1">Glycolipid biosynthesis; 4-amino-4-deoxy-alpha-L-arabinose undecaprenyl phosphate biosynthesis; 4-amino-4-deoxy-alpha-L-arabinose undecaprenyl phosphate from UDP-4-deoxy-4-formamido-beta-L-arabinose and undecaprenyl phosphate: step 2/2.</text>
</comment>
<comment type="pathway">
    <text evidence="1">Bacterial outer membrane biogenesis; lipopolysaccharide biosynthesis.</text>
</comment>
<comment type="similarity">
    <text evidence="1">Belongs to the polysaccharide deacetylase family. ArnD deformylase subfamily.</text>
</comment>
<dbReference type="EC" id="3.5.1.n3" evidence="1"/>
<dbReference type="EMBL" id="CP000034">
    <property type="protein sequence ID" value="ABB62523.1"/>
    <property type="molecule type" value="Genomic_DNA"/>
</dbReference>
<dbReference type="RefSeq" id="WP_000169752.1">
    <property type="nucleotide sequence ID" value="NC_007606.1"/>
</dbReference>
<dbReference type="RefSeq" id="YP_404014.1">
    <property type="nucleotide sequence ID" value="NC_007606.1"/>
</dbReference>
<dbReference type="SMR" id="Q32DT2"/>
<dbReference type="STRING" id="300267.SDY_2452"/>
<dbReference type="EnsemblBacteria" id="ABB62523">
    <property type="protein sequence ID" value="ABB62523"/>
    <property type="gene ID" value="SDY_2452"/>
</dbReference>
<dbReference type="KEGG" id="sdy:SDY_2452"/>
<dbReference type="PATRIC" id="fig|300267.13.peg.2958"/>
<dbReference type="HOGENOM" id="CLU_084199_0_0_6"/>
<dbReference type="UniPathway" id="UPA00030"/>
<dbReference type="UniPathway" id="UPA00036">
    <property type="reaction ID" value="UER00496"/>
</dbReference>
<dbReference type="Proteomes" id="UP000002716">
    <property type="component" value="Chromosome"/>
</dbReference>
<dbReference type="GO" id="GO:0016020">
    <property type="term" value="C:membrane"/>
    <property type="evidence" value="ECO:0007669"/>
    <property type="project" value="GOC"/>
</dbReference>
<dbReference type="GO" id="GO:0016811">
    <property type="term" value="F:hydrolase activity, acting on carbon-nitrogen (but not peptide) bonds, in linear amides"/>
    <property type="evidence" value="ECO:0007669"/>
    <property type="project" value="UniProtKB-UniRule"/>
</dbReference>
<dbReference type="GO" id="GO:0036108">
    <property type="term" value="P:4-amino-4-deoxy-alpha-L-arabinopyranosyl undecaprenyl phosphate biosynthetic process"/>
    <property type="evidence" value="ECO:0007669"/>
    <property type="project" value="UniProtKB-UniRule"/>
</dbReference>
<dbReference type="GO" id="GO:0009245">
    <property type="term" value="P:lipid A biosynthetic process"/>
    <property type="evidence" value="ECO:0007669"/>
    <property type="project" value="UniProtKB-UniRule"/>
</dbReference>
<dbReference type="GO" id="GO:0009103">
    <property type="term" value="P:lipopolysaccharide biosynthetic process"/>
    <property type="evidence" value="ECO:0007669"/>
    <property type="project" value="UniProtKB-UniRule"/>
</dbReference>
<dbReference type="GO" id="GO:0046677">
    <property type="term" value="P:response to antibiotic"/>
    <property type="evidence" value="ECO:0007669"/>
    <property type="project" value="UniProtKB-KW"/>
</dbReference>
<dbReference type="CDD" id="cd10939">
    <property type="entry name" value="CE4_ArnD"/>
    <property type="match status" value="1"/>
</dbReference>
<dbReference type="Gene3D" id="3.20.20.370">
    <property type="entry name" value="Glycoside hydrolase/deacetylase"/>
    <property type="match status" value="1"/>
</dbReference>
<dbReference type="HAMAP" id="MF_01870">
    <property type="entry name" value="ArnD"/>
    <property type="match status" value="1"/>
</dbReference>
<dbReference type="InterPro" id="IPR023557">
    <property type="entry name" value="ArnD"/>
</dbReference>
<dbReference type="InterPro" id="IPR011330">
    <property type="entry name" value="Glyco_hydro/deAcase_b/a-brl"/>
</dbReference>
<dbReference type="InterPro" id="IPR002509">
    <property type="entry name" value="NODB_dom"/>
</dbReference>
<dbReference type="InterPro" id="IPR050248">
    <property type="entry name" value="Polysacc_deacetylase_ArnD"/>
</dbReference>
<dbReference type="NCBIfam" id="NF011923">
    <property type="entry name" value="PRK15394.1"/>
    <property type="match status" value="1"/>
</dbReference>
<dbReference type="PANTHER" id="PTHR10587:SF137">
    <property type="entry name" value="4-DEOXY-4-FORMAMIDO-L-ARABINOSE-PHOSPHOUNDECAPRENOL DEFORMYLASE ARND-RELATED"/>
    <property type="match status" value="1"/>
</dbReference>
<dbReference type="PANTHER" id="PTHR10587">
    <property type="entry name" value="GLYCOSYL TRANSFERASE-RELATED"/>
    <property type="match status" value="1"/>
</dbReference>
<dbReference type="Pfam" id="PF01522">
    <property type="entry name" value="Polysacc_deac_1"/>
    <property type="match status" value="1"/>
</dbReference>
<dbReference type="SUPFAM" id="SSF88713">
    <property type="entry name" value="Glycoside hydrolase/deacetylase"/>
    <property type="match status" value="1"/>
</dbReference>
<dbReference type="PROSITE" id="PS51677">
    <property type="entry name" value="NODB"/>
    <property type="match status" value="1"/>
</dbReference>
<proteinExistence type="inferred from homology"/>
<sequence length="296" mass="33114">MTKVGLRIDVDTFRGTREGVPRLLEILSKHNIQASIFFSVSPDNMGRHLWRLVKPQFLWKMLRSNAASLYGWDILLAGTAWLGKEIGHANADIIREAAKHHEVGLHAWDHHAWQARSGNWDRQTMIDDIARGLRTLEEIIGQPVTCSAAAGWRADQQVIEAKEAFHLRYNSDCRGAMPFRPLLESGNPGTAQIPVTLPTWDEVIGRDVKAEDFNGWLLNRILRDKGTPVYTIHAEVEGCAYQHNFVALLKRAAQEGVTFCPLSELLSETLPLGQVVRGNIAGREGWLGCQQIAGSR</sequence>
<protein>
    <recommendedName>
        <fullName evidence="1">Probable 4-deoxy-4-formamido-L-arabinose-phosphoundecaprenol deformylase ArnD</fullName>
        <ecNumber evidence="1">3.5.1.n3</ecNumber>
    </recommendedName>
</protein>
<name>ARND_SHIDS</name>
<organism>
    <name type="scientific">Shigella dysenteriae serotype 1 (strain Sd197)</name>
    <dbReference type="NCBI Taxonomy" id="300267"/>
    <lineage>
        <taxon>Bacteria</taxon>
        <taxon>Pseudomonadati</taxon>
        <taxon>Pseudomonadota</taxon>
        <taxon>Gammaproteobacteria</taxon>
        <taxon>Enterobacterales</taxon>
        <taxon>Enterobacteriaceae</taxon>
        <taxon>Shigella</taxon>
    </lineage>
</organism>
<gene>
    <name evidence="1" type="primary">arnD</name>
    <name type="ordered locus">SDY_2452</name>
</gene>
<keyword id="KW-0046">Antibiotic resistance</keyword>
<keyword id="KW-0378">Hydrolase</keyword>
<keyword id="KW-0441">Lipid A biosynthesis</keyword>
<keyword id="KW-0444">Lipid biosynthesis</keyword>
<keyword id="KW-0443">Lipid metabolism</keyword>
<keyword id="KW-0448">Lipopolysaccharide biosynthesis</keyword>
<keyword id="KW-1185">Reference proteome</keyword>
<evidence type="ECO:0000255" key="1">
    <source>
        <dbReference type="HAMAP-Rule" id="MF_01870"/>
    </source>
</evidence>
<accession>Q32DT2</accession>